<gene>
    <name evidence="23" type="primary">SLC15A1</name>
    <name evidence="14" type="synonym">PEPT1</name>
</gene>
<accession>P46059</accession>
<accession>Q5VW82</accession>
<name>S15A1_HUMAN</name>
<protein>
    <recommendedName>
        <fullName evidence="15">Solute carrier family 15 member 1</fullName>
    </recommendedName>
    <alternativeName>
        <fullName evidence="14">Intestinal H(+)/peptide cotransporter</fullName>
    </alternativeName>
    <alternativeName>
        <fullName evidence="14">Oligopeptide transporter, small intestine isoform</fullName>
    </alternativeName>
    <alternativeName>
        <fullName evidence="14">Peptide transporter 1</fullName>
    </alternativeName>
</protein>
<feature type="chain" id="PRO_0000064304" description="Solute carrier family 15 member 1">
    <location>
        <begin position="1"/>
        <end position="708"/>
    </location>
</feature>
<feature type="transmembrane region" description="Helical" evidence="3">
    <location>
        <begin position="1"/>
        <end position="21"/>
    </location>
</feature>
<feature type="topological domain" description="Extracellular" evidence="3">
    <location>
        <begin position="22"/>
        <end position="53"/>
    </location>
</feature>
<feature type="transmembrane region" description="Helical" evidence="3">
    <location>
        <begin position="54"/>
        <end position="74"/>
    </location>
</feature>
<feature type="topological domain" description="Cytoplasmic" evidence="3">
    <location>
        <begin position="75"/>
        <end position="82"/>
    </location>
</feature>
<feature type="transmembrane region" description="Helical" evidence="3">
    <location>
        <begin position="83"/>
        <end position="103"/>
    </location>
</feature>
<feature type="topological domain" description="Extracellular" evidence="3">
    <location>
        <begin position="104"/>
        <end position="118"/>
    </location>
</feature>
<feature type="transmembrane region" description="Helical" evidence="3">
    <location>
        <begin position="119"/>
        <end position="139"/>
    </location>
</feature>
<feature type="topological domain" description="Cytoplasmic" evidence="3">
    <location>
        <begin position="140"/>
        <end position="161"/>
    </location>
</feature>
<feature type="transmembrane region" description="Helical" evidence="3">
    <location>
        <begin position="162"/>
        <end position="182"/>
    </location>
</feature>
<feature type="topological domain" description="Extracellular" evidence="3">
    <location>
        <begin position="183"/>
        <end position="198"/>
    </location>
</feature>
<feature type="transmembrane region" description="Helical" evidence="3">
    <location>
        <begin position="199"/>
        <end position="219"/>
    </location>
</feature>
<feature type="topological domain" description="Cytoplasmic" evidence="3">
    <location>
        <begin position="220"/>
        <end position="276"/>
    </location>
</feature>
<feature type="transmembrane region" description="Helical" evidence="3">
    <location>
        <begin position="277"/>
        <end position="297"/>
    </location>
</feature>
<feature type="topological domain" description="Extracellular" evidence="3">
    <location>
        <begin position="298"/>
        <end position="327"/>
    </location>
</feature>
<feature type="transmembrane region" description="Helical" evidence="3">
    <location>
        <begin position="328"/>
        <end position="348"/>
    </location>
</feature>
<feature type="topological domain" description="Cytoplasmic" evidence="3">
    <location>
        <begin position="349"/>
        <end position="361"/>
    </location>
</feature>
<feature type="transmembrane region" description="Helical" evidence="3">
    <location>
        <begin position="362"/>
        <end position="382"/>
    </location>
</feature>
<feature type="topological domain" description="Extracellular" evidence="3">
    <location>
        <begin position="383"/>
        <end position="584"/>
    </location>
</feature>
<feature type="transmembrane region" description="Helical" evidence="3">
    <location>
        <begin position="585"/>
        <end position="605"/>
    </location>
</feature>
<feature type="topological domain" description="Cytoplasmic" evidence="3">
    <location>
        <begin position="606"/>
        <end position="619"/>
    </location>
</feature>
<feature type="transmembrane region" description="Helical" evidence="3">
    <location>
        <begin position="620"/>
        <end position="640"/>
    </location>
</feature>
<feature type="topological domain" description="Extracellular" evidence="3">
    <location>
        <begin position="641"/>
        <end position="645"/>
    </location>
</feature>
<feature type="transmembrane region" description="Helical" evidence="3">
    <location>
        <begin position="646"/>
        <end position="666"/>
    </location>
</feature>
<feature type="topological domain" description="Cytoplasmic" evidence="3">
    <location>
        <begin position="667"/>
        <end position="708"/>
    </location>
</feature>
<feature type="region of interest" description="Extracellular domain (ECD)" evidence="2">
    <location>
        <begin position="383"/>
        <end position="584"/>
    </location>
</feature>
<feature type="glycosylation site" description="N-linked (GlcNAc...) asparagine" evidence="3">
    <location>
        <position position="50"/>
    </location>
</feature>
<feature type="glycosylation site" description="N-linked (GlcNAc...) asparagine" evidence="3">
    <location>
        <position position="404"/>
    </location>
</feature>
<feature type="glycosylation site" description="N-linked (GlcNAc...) asparagine" evidence="3">
    <location>
        <position position="408"/>
    </location>
</feature>
<feature type="glycosylation site" description="N-linked (GlcNAc...) asparagine" evidence="3">
    <location>
        <position position="439"/>
    </location>
</feature>
<feature type="glycosylation site" description="N-linked (GlcNAc...) asparagine" evidence="3">
    <location>
        <position position="509"/>
    </location>
</feature>
<feature type="glycosylation site" description="N-linked (GlcNAc...) asparagine" evidence="3">
    <location>
        <position position="514"/>
    </location>
</feature>
<feature type="glycosylation site" description="N-linked (GlcNAc...) asparagine" evidence="3">
    <location>
        <position position="562"/>
    </location>
</feature>
<feature type="sequence variant" id="VAR_029321" description="In dbSNP:rs8187818." evidence="6">
    <original>V</original>
    <variation>I</variation>
    <location>
        <position position="21"/>
    </location>
</feature>
<feature type="sequence variant" id="VAR_029322" description="In dbSNP:rs8187817." evidence="6">
    <original>F</original>
    <variation>Y</variation>
    <location>
        <position position="28"/>
    </location>
</feature>
<feature type="sequence variant" id="VAR_022147" description="In dbSNP:rs2297322." evidence="4 6">
    <original>S</original>
    <variation>N</variation>
    <location>
        <position position="117"/>
    </location>
</feature>
<feature type="sequence variant" id="VAR_029323" description="In dbSNP:rs8187821." evidence="6">
    <original>S</original>
    <variation>R</variation>
    <location>
        <position position="117"/>
    </location>
</feature>
<feature type="sequence variant" id="VAR_020456" description="In dbSNP:rs8187820." evidence="6">
    <original>V</original>
    <variation>M</variation>
    <location>
        <position position="122"/>
    </location>
</feature>
<feature type="sequence variant" id="VAR_020457" description="In dbSNP:rs4646227." evidence="4 6">
    <original>G</original>
    <variation>A</variation>
    <location>
        <position position="419"/>
    </location>
</feature>
<feature type="sequence variant" id="VAR_022148" description="In dbSNP:rs2274828." evidence="6">
    <original>V</original>
    <variation>I</variation>
    <location>
        <position position="450"/>
    </location>
</feature>
<feature type="sequence variant" id="VAR_020458" description="In dbSNP:rs8187838." evidence="6">
    <original>T</original>
    <variation>N</variation>
    <location>
        <position position="451"/>
    </location>
</feature>
<feature type="sequence variant" id="VAR_022149" description="In dbSNP:rs2274827.">
    <original>R</original>
    <variation>C</variation>
    <location>
        <position position="459"/>
    </location>
</feature>
<feature type="sequence variant" id="VAR_029324" description="In dbSNP:rs8187830." evidence="6">
    <original>P</original>
    <variation>S</variation>
    <location>
        <position position="537"/>
    </location>
</feature>
<feature type="mutagenesis site" description="Does not affect peptide transporter activity." evidence="9">
    <original>D</original>
    <variation>A</variation>
    <location>
        <position position="573"/>
    </location>
</feature>
<feature type="mutagenesis site" description="Reduced peptide transporter activity." evidence="8">
    <original>Y</original>
    <variation>C</variation>
    <location>
        <position position="588"/>
    </location>
</feature>
<feature type="mutagenesis site" description="Does not affect peptide transporter activity." evidence="8">
    <original>G</original>
    <variation>A</variation>
    <location>
        <position position="594"/>
    </location>
</feature>
<feature type="mutagenesis site" description="Nearly abolished peptide transporter activity." evidence="8">
    <original>G</original>
    <variation>C</variation>
    <location>
        <position position="594"/>
    </location>
</feature>
<feature type="mutagenesis site" description="Abolished peptide transporter activity." evidence="8">
    <original>G</original>
    <variation>V</variation>
    <location>
        <position position="594"/>
    </location>
</feature>
<feature type="mutagenesis site" description="Nearly abolished peptide transporter activity." evidence="8">
    <original>E</original>
    <variation>C</variation>
    <location>
        <position position="595"/>
    </location>
</feature>
<feature type="mutagenesis site" description="Does not affect peptide transporter activity." evidence="8">
    <original>E</original>
    <variation>D</variation>
    <location>
        <position position="595"/>
    </location>
</feature>
<feature type="mutagenesis site" description="Abolished peptide transporter activity." evidence="8">
    <original>E</original>
    <variation>K</variation>
    <variation>R</variation>
    <location>
        <position position="595"/>
    </location>
</feature>
<feature type="helix" evidence="24">
    <location>
        <begin position="13"/>
        <end position="44"/>
    </location>
</feature>
<feature type="helix" evidence="24">
    <location>
        <begin position="51"/>
        <end position="55"/>
    </location>
</feature>
<feature type="strand" evidence="24">
    <location>
        <begin position="56"/>
        <end position="58"/>
    </location>
</feature>
<feature type="turn" evidence="24">
    <location>
        <begin position="59"/>
        <end position="61"/>
    </location>
</feature>
<feature type="helix" evidence="24">
    <location>
        <begin position="62"/>
        <end position="65"/>
    </location>
</feature>
<feature type="helix" evidence="24">
    <location>
        <begin position="67"/>
        <end position="74"/>
    </location>
</feature>
<feature type="turn" evidence="24">
    <location>
        <begin position="75"/>
        <end position="78"/>
    </location>
</feature>
<feature type="helix" evidence="24">
    <location>
        <begin position="79"/>
        <end position="107"/>
    </location>
</feature>
<feature type="helix" evidence="24">
    <location>
        <begin position="118"/>
        <end position="148"/>
    </location>
</feature>
<feature type="helix" evidence="24">
    <location>
        <begin position="156"/>
        <end position="184"/>
    </location>
</feature>
<feature type="helix" evidence="24">
    <location>
        <begin position="198"/>
        <end position="218"/>
    </location>
</feature>
<feature type="turn" evidence="24">
    <location>
        <begin position="219"/>
        <end position="222"/>
    </location>
</feature>
<feature type="helix" evidence="24">
    <location>
        <begin position="232"/>
        <end position="248"/>
    </location>
</feature>
<feature type="helix" evidence="24">
    <location>
        <begin position="262"/>
        <end position="265"/>
    </location>
</feature>
<feature type="turn" evidence="24">
    <location>
        <begin position="266"/>
        <end position="268"/>
    </location>
</feature>
<feature type="helix" evidence="24">
    <location>
        <begin position="271"/>
        <end position="285"/>
    </location>
</feature>
<feature type="helix" evidence="24">
    <location>
        <begin position="290"/>
        <end position="292"/>
    </location>
</feature>
<feature type="helix" evidence="24">
    <location>
        <begin position="293"/>
        <end position="297"/>
    </location>
</feature>
<feature type="helix" evidence="24">
    <location>
        <begin position="299"/>
        <end position="310"/>
    </location>
</feature>
<feature type="helix" evidence="24">
    <location>
        <begin position="322"/>
        <end position="326"/>
    </location>
</feature>
<feature type="helix" evidence="24">
    <location>
        <begin position="327"/>
        <end position="342"/>
    </location>
</feature>
<feature type="helix" evidence="24">
    <location>
        <begin position="344"/>
        <end position="350"/>
    </location>
</feature>
<feature type="helix" evidence="24">
    <location>
        <begin position="357"/>
        <end position="383"/>
    </location>
</feature>
<feature type="strand" evidence="24">
    <location>
        <begin position="394"/>
        <end position="401"/>
    </location>
</feature>
<feature type="strand" evidence="24">
    <location>
        <begin position="403"/>
        <end position="405"/>
    </location>
</feature>
<feature type="strand" evidence="24">
    <location>
        <begin position="407"/>
        <end position="411"/>
    </location>
</feature>
<feature type="strand" evidence="24">
    <location>
        <begin position="414"/>
        <end position="418"/>
    </location>
</feature>
<feature type="strand" evidence="24">
    <location>
        <begin position="428"/>
        <end position="431"/>
    </location>
</feature>
<feature type="helix" evidence="24">
    <location>
        <begin position="432"/>
        <end position="434"/>
    </location>
</feature>
<feature type="strand" evidence="24">
    <location>
        <begin position="439"/>
        <end position="441"/>
    </location>
</feature>
<feature type="strand" evidence="24">
    <location>
        <begin position="458"/>
        <end position="466"/>
    </location>
</feature>
<feature type="strand" evidence="24">
    <location>
        <begin position="469"/>
        <end position="474"/>
    </location>
</feature>
<feature type="helix" evidence="24">
    <location>
        <begin position="482"/>
        <end position="484"/>
    </location>
</feature>
<feature type="strand" evidence="24">
    <location>
        <begin position="486"/>
        <end position="492"/>
    </location>
</feature>
<feature type="strand" evidence="24">
    <location>
        <begin position="494"/>
        <end position="496"/>
    </location>
</feature>
<feature type="strand" evidence="24">
    <location>
        <begin position="498"/>
        <end position="502"/>
    </location>
</feature>
<feature type="strand" evidence="24">
    <location>
        <begin position="505"/>
        <end position="510"/>
    </location>
</feature>
<feature type="strand" evidence="24">
    <location>
        <begin position="519"/>
        <end position="521"/>
    </location>
</feature>
<feature type="strand" evidence="24">
    <location>
        <begin position="527"/>
        <end position="535"/>
    </location>
</feature>
<feature type="strand" evidence="24">
    <location>
        <begin position="542"/>
        <end position="544"/>
    </location>
</feature>
<feature type="strand" evidence="24">
    <location>
        <begin position="553"/>
        <end position="560"/>
    </location>
</feature>
<feature type="strand" evidence="24">
    <location>
        <begin position="566"/>
        <end position="574"/>
    </location>
</feature>
<feature type="helix" evidence="24">
    <location>
        <begin position="581"/>
        <end position="584"/>
    </location>
</feature>
<feature type="helix" evidence="24">
    <location>
        <begin position="585"/>
        <end position="609"/>
    </location>
</feature>
<feature type="helix" evidence="24">
    <location>
        <begin position="615"/>
        <end position="636"/>
    </location>
</feature>
<feature type="helix" evidence="24">
    <location>
        <begin position="644"/>
        <end position="650"/>
    </location>
</feature>
<feature type="turn" evidence="24">
    <location>
        <begin position="651"/>
        <end position="655"/>
    </location>
</feature>
<feature type="helix" evidence="24">
    <location>
        <begin position="656"/>
        <end position="667"/>
    </location>
</feature>
<feature type="helix" evidence="24">
    <location>
        <begin position="671"/>
        <end position="673"/>
    </location>
</feature>
<feature type="helix" evidence="24">
    <location>
        <begin position="676"/>
        <end position="679"/>
    </location>
</feature>
<feature type="helix" evidence="24">
    <location>
        <begin position="680"/>
        <end position="682"/>
    </location>
</feature>
<dbReference type="EMBL" id="U13173">
    <property type="protein sequence ID" value="AAB61693.1"/>
    <property type="molecule type" value="mRNA"/>
</dbReference>
<dbReference type="EMBL" id="U21936">
    <property type="protein sequence ID" value="AAA63797.1"/>
    <property type="molecule type" value="mRNA"/>
</dbReference>
<dbReference type="EMBL" id="AL391670">
    <property type="status" value="NOT_ANNOTATED_CDS"/>
    <property type="molecule type" value="Genomic_DNA"/>
</dbReference>
<dbReference type="EMBL" id="AL353574">
    <property type="status" value="NOT_ANNOTATED_CDS"/>
    <property type="molecule type" value="Genomic_DNA"/>
</dbReference>
<dbReference type="EMBL" id="BC096328">
    <property type="protein sequence ID" value="AAH96328.1"/>
    <property type="molecule type" value="mRNA"/>
</dbReference>
<dbReference type="EMBL" id="BC096329">
    <property type="protein sequence ID" value="AAH96329.1"/>
    <property type="molecule type" value="mRNA"/>
</dbReference>
<dbReference type="CCDS" id="CCDS9489.1"/>
<dbReference type="PIR" id="A56163">
    <property type="entry name" value="A56163"/>
</dbReference>
<dbReference type="RefSeq" id="NP_005064.1">
    <property type="nucleotide sequence ID" value="NM_005073.4"/>
</dbReference>
<dbReference type="PDB" id="7PMW">
    <property type="method" value="EM"/>
    <property type="resolution" value="4.10 A"/>
    <property type="chains" value="A=1-708"/>
</dbReference>
<dbReference type="PDB" id="7PMX">
    <property type="method" value="EM"/>
    <property type="resolution" value="3.50 A"/>
    <property type="chains" value="A=1-708"/>
</dbReference>
<dbReference type="PDB" id="7PN1">
    <property type="method" value="EM"/>
    <property type="resolution" value="3.90 A"/>
    <property type="chains" value="A=1-708"/>
</dbReference>
<dbReference type="PDBsum" id="7PMW"/>
<dbReference type="PDBsum" id="7PMX"/>
<dbReference type="PDBsum" id="7PN1"/>
<dbReference type="EMDB" id="EMD-13542"/>
<dbReference type="EMDB" id="EMD-13543"/>
<dbReference type="EMDB" id="EMD-13545"/>
<dbReference type="SMR" id="P46059"/>
<dbReference type="BioGRID" id="112452">
    <property type="interactions" value="82"/>
</dbReference>
<dbReference type="FunCoup" id="P46059">
    <property type="interactions" value="200"/>
</dbReference>
<dbReference type="IntAct" id="P46059">
    <property type="interactions" value="76"/>
</dbReference>
<dbReference type="STRING" id="9606.ENSP00000365686"/>
<dbReference type="BindingDB" id="P46059"/>
<dbReference type="ChEMBL" id="CHEMBL4605"/>
<dbReference type="DrugBank" id="DB00855">
    <property type="generic name" value="Aminolevulinic acid"/>
</dbReference>
<dbReference type="DrugBank" id="DB01060">
    <property type="generic name" value="Amoxicillin"/>
</dbReference>
<dbReference type="DrugBank" id="DB00415">
    <property type="generic name" value="Ampicillin"/>
</dbReference>
<dbReference type="DrugBank" id="DB08795">
    <property type="generic name" value="Azidocillin"/>
</dbReference>
<dbReference type="DrugBank" id="DB00542">
    <property type="generic name" value="Benazepril"/>
</dbReference>
<dbReference type="DrugBank" id="DB03793">
    <property type="generic name" value="Benzoic acid"/>
</dbReference>
<dbReference type="DrugBank" id="DB01053">
    <property type="generic name" value="Benzylpenicillin"/>
</dbReference>
<dbReference type="DrugBank" id="DB01197">
    <property type="generic name" value="Captopril"/>
</dbReference>
<dbReference type="DrugBank" id="DB00833">
    <property type="generic name" value="Cefaclor"/>
</dbReference>
<dbReference type="DrugBank" id="DB01140">
    <property type="generic name" value="Cefadroxil"/>
</dbReference>
<dbReference type="DrugBank" id="DB00456">
    <property type="generic name" value="Cefalotin"/>
</dbReference>
<dbReference type="DrugBank" id="DB00535">
    <property type="generic name" value="Cefdinir"/>
</dbReference>
<dbReference type="DrugBank" id="DB01413">
    <property type="generic name" value="Cefepime"/>
</dbReference>
<dbReference type="DrugBank" id="DB00671">
    <property type="generic name" value="Cefixime"/>
</dbReference>
<dbReference type="DrugBank" id="DB00274">
    <property type="generic name" value="Cefmetazole"/>
</dbReference>
<dbReference type="DrugBank" id="DB00493">
    <property type="generic name" value="Cefotaxime"/>
</dbReference>
<dbReference type="DrugBank" id="DB01333">
    <property type="generic name" value="Cefradine"/>
</dbReference>
<dbReference type="DrugBank" id="DB01415">
    <property type="generic name" value="Ceftibuten"/>
</dbReference>
<dbReference type="DrugBank" id="DB01332">
    <property type="generic name" value="Ceftizoxime"/>
</dbReference>
<dbReference type="DrugBank" id="DB01212">
    <property type="generic name" value="Ceftriaxone"/>
</dbReference>
<dbReference type="DrugBank" id="DB01112">
    <property type="generic name" value="Cefuroxime"/>
</dbReference>
<dbReference type="DrugBank" id="DB00567">
    <property type="generic name" value="Cephalexin"/>
</dbReference>
<dbReference type="DrugBank" id="DB00672">
    <property type="generic name" value="Chlorpropamide"/>
</dbReference>
<dbReference type="DrugBank" id="DB01340">
    <property type="generic name" value="Cilazapril"/>
</dbReference>
<dbReference type="DrugBank" id="DB01147">
    <property type="generic name" value="Cloxacillin"/>
</dbReference>
<dbReference type="DrugBank" id="DB01000">
    <property type="generic name" value="Cyclacillin"/>
</dbReference>
<dbReference type="DrugBank" id="DB09213">
    <property type="generic name" value="Dexibuprofen"/>
</dbReference>
<dbReference type="DrugBank" id="DB00485">
    <property type="generic name" value="Dicloxacillin"/>
</dbReference>
<dbReference type="DrugBank" id="DB00584">
    <property type="generic name" value="Enalapril"/>
</dbReference>
<dbReference type="DrugBank" id="DB01095">
    <property type="generic name" value="Fluvastatin"/>
</dbReference>
<dbReference type="DrugBank" id="DB00492">
    <property type="generic name" value="Fosinopril"/>
</dbReference>
<dbReference type="DrugBank" id="DB01016">
    <property type="generic name" value="Glyburide"/>
</dbReference>
<dbReference type="DrugBank" id="DB01235">
    <property type="generic name" value="Levodopa"/>
</dbReference>
<dbReference type="DrugBank" id="DB01255">
    <property type="generic name" value="Lisdexamfetamine"/>
</dbReference>
<dbReference type="DrugBank" id="DB00722">
    <property type="generic name" value="Lisinopril"/>
</dbReference>
<dbReference type="DrugBank" id="DB00447">
    <property type="generic name" value="Loracarbef"/>
</dbReference>
<dbReference type="DrugBank" id="DB00563">
    <property type="generic name" value="Methotrexate"/>
</dbReference>
<dbReference type="DrugBank" id="DB00968">
    <property type="generic name" value="Methyldopa"/>
</dbReference>
<dbReference type="DrugBank" id="DB00211">
    <property type="generic name" value="Midodrine"/>
</dbReference>
<dbReference type="DrugBank" id="DB00691">
    <property type="generic name" value="Moexipril"/>
</dbReference>
<dbReference type="DrugBank" id="DB00731">
    <property type="generic name" value="Nateglinide"/>
</dbReference>
<dbReference type="DrugBank" id="DB00198">
    <property type="generic name" value="Oseltamivir"/>
</dbReference>
<dbReference type="DrugBank" id="DB00713">
    <property type="generic name" value="Oxacillin"/>
</dbReference>
<dbReference type="DrugBank" id="DB00790">
    <property type="generic name" value="Perindopril"/>
</dbReference>
<dbReference type="DrugBank" id="DB00417">
    <property type="generic name" value="Phenoxymethylpenicillin"/>
</dbReference>
<dbReference type="DrugBank" id="DB00881">
    <property type="generic name" value="Quinapril"/>
</dbReference>
<dbReference type="DrugBank" id="DB00178">
    <property type="generic name" value="Ramipril"/>
</dbReference>
<dbReference type="DrugBank" id="DB01348">
    <property type="generic name" value="Spirapril"/>
</dbReference>
<dbReference type="DrugBank" id="DB01956">
    <property type="generic name" value="Taurine"/>
</dbReference>
<dbReference type="DrugBank" id="DB08836">
    <property type="generic name" value="Temocapril"/>
</dbReference>
<dbReference type="DrugBank" id="DB01124">
    <property type="generic name" value="Tolbutamide"/>
</dbReference>
<dbReference type="DrugBank" id="DB00519">
    <property type="generic name" value="Trandolapril"/>
</dbReference>
<dbReference type="DrugBank" id="DB03424">
    <property type="generic name" value="Ubenimex"/>
</dbReference>
<dbReference type="DrugBank" id="DB00577">
    <property type="generic name" value="Valaciclovir"/>
</dbReference>
<dbReference type="DrugBank" id="DB01610">
    <property type="generic name" value="Valganciclovir"/>
</dbReference>
<dbReference type="DrugCentral" id="P46059"/>
<dbReference type="GuidetoPHARMACOLOGY" id="984"/>
<dbReference type="TCDB" id="2.A.17.4.9">
    <property type="family name" value="the proton-dependent oligopeptide transporter (pot/ptr) family"/>
</dbReference>
<dbReference type="GlyCosmos" id="P46059">
    <property type="glycosylation" value="7 sites, No reported glycans"/>
</dbReference>
<dbReference type="GlyGen" id="P46059">
    <property type="glycosylation" value="7 sites"/>
</dbReference>
<dbReference type="iPTMnet" id="P46059"/>
<dbReference type="PhosphoSitePlus" id="P46059"/>
<dbReference type="BioMuta" id="SLC15A1"/>
<dbReference type="DMDM" id="1172435"/>
<dbReference type="jPOST" id="P46059"/>
<dbReference type="MassIVE" id="P46059"/>
<dbReference type="PaxDb" id="9606-ENSP00000365686"/>
<dbReference type="PeptideAtlas" id="P46059"/>
<dbReference type="ProteomicsDB" id="55711"/>
<dbReference type="Antibodypedia" id="10820">
    <property type="antibodies" value="214 antibodies from 31 providers"/>
</dbReference>
<dbReference type="DNASU" id="6564"/>
<dbReference type="Ensembl" id="ENST00000376503.10">
    <property type="protein sequence ID" value="ENSP00000365686.4"/>
    <property type="gene ID" value="ENSG00000088386.17"/>
</dbReference>
<dbReference type="GeneID" id="6564"/>
<dbReference type="KEGG" id="hsa:6564"/>
<dbReference type="MANE-Select" id="ENST00000376503.10">
    <property type="protein sequence ID" value="ENSP00000365686.4"/>
    <property type="RefSeq nucleotide sequence ID" value="NM_005073.4"/>
    <property type="RefSeq protein sequence ID" value="NP_005064.1"/>
</dbReference>
<dbReference type="UCSC" id="uc001vno.4">
    <property type="organism name" value="human"/>
</dbReference>
<dbReference type="AGR" id="HGNC:10920"/>
<dbReference type="CTD" id="6564"/>
<dbReference type="DisGeNET" id="6564"/>
<dbReference type="GeneCards" id="SLC15A1"/>
<dbReference type="HGNC" id="HGNC:10920">
    <property type="gene designation" value="SLC15A1"/>
</dbReference>
<dbReference type="HPA" id="ENSG00000088386">
    <property type="expression patterns" value="Tissue enriched (intestine)"/>
</dbReference>
<dbReference type="MIM" id="600544">
    <property type="type" value="gene"/>
</dbReference>
<dbReference type="neXtProt" id="NX_P46059"/>
<dbReference type="OpenTargets" id="ENSG00000088386"/>
<dbReference type="PharmGKB" id="PA323"/>
<dbReference type="VEuPathDB" id="HostDB:ENSG00000088386"/>
<dbReference type="eggNOG" id="KOG1237">
    <property type="taxonomic scope" value="Eukaryota"/>
</dbReference>
<dbReference type="GeneTree" id="ENSGT00940000155995"/>
<dbReference type="HOGENOM" id="CLU_004790_3_0_1"/>
<dbReference type="InParanoid" id="P46059"/>
<dbReference type="OMA" id="FMTFDAD"/>
<dbReference type="OrthoDB" id="205993at2759"/>
<dbReference type="PAN-GO" id="P46059">
    <property type="GO annotations" value="2 GO annotations based on evolutionary models"/>
</dbReference>
<dbReference type="PhylomeDB" id="P46059"/>
<dbReference type="TreeFam" id="TF330897"/>
<dbReference type="PathwayCommons" id="P46059"/>
<dbReference type="Reactome" id="R-HSA-427975">
    <property type="pathway name" value="Proton/oligopeptide cotransporters"/>
</dbReference>
<dbReference type="SignaLink" id="P46059"/>
<dbReference type="BioGRID-ORCS" id="6564">
    <property type="hits" value="11 hits in 1140 CRISPR screens"/>
</dbReference>
<dbReference type="ChiTaRS" id="SLC15A1">
    <property type="organism name" value="human"/>
</dbReference>
<dbReference type="GeneWiki" id="Peptide_transporter_1"/>
<dbReference type="GenomeRNAi" id="6564"/>
<dbReference type="Pharos" id="P46059">
    <property type="development level" value="Tchem"/>
</dbReference>
<dbReference type="PRO" id="PR:P46059"/>
<dbReference type="Proteomes" id="UP000005640">
    <property type="component" value="Chromosome 13"/>
</dbReference>
<dbReference type="RNAct" id="P46059">
    <property type="molecule type" value="protein"/>
</dbReference>
<dbReference type="Bgee" id="ENSG00000088386">
    <property type="expression patterns" value="Expressed in duodenum and 106 other cell types or tissues"/>
</dbReference>
<dbReference type="ExpressionAtlas" id="P46059">
    <property type="expression patterns" value="baseline and differential"/>
</dbReference>
<dbReference type="GO" id="GO:0016324">
    <property type="term" value="C:apical plasma membrane"/>
    <property type="evidence" value="ECO:0000314"/>
    <property type="project" value="UniProtKB"/>
</dbReference>
<dbReference type="GO" id="GO:0005903">
    <property type="term" value="C:brush border"/>
    <property type="evidence" value="ECO:0007669"/>
    <property type="project" value="Ensembl"/>
</dbReference>
<dbReference type="GO" id="GO:0016020">
    <property type="term" value="C:membrane"/>
    <property type="evidence" value="ECO:0000250"/>
    <property type="project" value="ARUK-UCL"/>
</dbReference>
<dbReference type="GO" id="GO:0005886">
    <property type="term" value="C:plasma membrane"/>
    <property type="evidence" value="ECO:0000314"/>
    <property type="project" value="ARUK-UCL"/>
</dbReference>
<dbReference type="GO" id="GO:0071916">
    <property type="term" value="F:dipeptide transmembrane transporter activity"/>
    <property type="evidence" value="ECO:0000314"/>
    <property type="project" value="UniProtKB"/>
</dbReference>
<dbReference type="GO" id="GO:0015333">
    <property type="term" value="F:peptide:proton symporter activity"/>
    <property type="evidence" value="ECO:0000314"/>
    <property type="project" value="UniProtKB"/>
</dbReference>
<dbReference type="GO" id="GO:0005427">
    <property type="term" value="F:proton-dependent oligopeptide secondary active transmembrane transporter activity"/>
    <property type="evidence" value="ECO:0007669"/>
    <property type="project" value="Ensembl"/>
</dbReference>
<dbReference type="GO" id="GO:0042937">
    <property type="term" value="F:tripeptide transmembrane transporter activity"/>
    <property type="evidence" value="ECO:0000314"/>
    <property type="project" value="UniProtKB"/>
</dbReference>
<dbReference type="GO" id="GO:0140206">
    <property type="term" value="P:dipeptide import across plasma membrane"/>
    <property type="evidence" value="ECO:0000314"/>
    <property type="project" value="UniProtKB"/>
</dbReference>
<dbReference type="GO" id="GO:0006811">
    <property type="term" value="P:monoatomic ion transport"/>
    <property type="evidence" value="ECO:0000304"/>
    <property type="project" value="Reactome"/>
</dbReference>
<dbReference type="GO" id="GO:0015031">
    <property type="term" value="P:protein transport"/>
    <property type="evidence" value="ECO:0007669"/>
    <property type="project" value="UniProtKB-KW"/>
</dbReference>
<dbReference type="GO" id="GO:0140207">
    <property type="term" value="P:tripeptide import across plasma membrane"/>
    <property type="evidence" value="ECO:0000250"/>
    <property type="project" value="ARUK-UCL"/>
</dbReference>
<dbReference type="CDD" id="cd17412">
    <property type="entry name" value="MFS_SLC15A1"/>
    <property type="match status" value="1"/>
</dbReference>
<dbReference type="FunFam" id="1.20.1250.20:FF:000049">
    <property type="entry name" value="Solute carrier family 15 member 2"/>
    <property type="match status" value="1"/>
</dbReference>
<dbReference type="FunFam" id="1.20.1250.20:FF:000205">
    <property type="entry name" value="Solute carrier family 15 oligopeptide transporter member 1"/>
    <property type="match status" value="1"/>
</dbReference>
<dbReference type="Gene3D" id="1.20.1250.20">
    <property type="entry name" value="MFS general substrate transporter like domains"/>
    <property type="match status" value="2"/>
</dbReference>
<dbReference type="InterPro" id="IPR036259">
    <property type="entry name" value="MFS_trans_sf"/>
</dbReference>
<dbReference type="InterPro" id="IPR004768">
    <property type="entry name" value="Oligopep_transport"/>
</dbReference>
<dbReference type="InterPro" id="IPR000109">
    <property type="entry name" value="POT_fam"/>
</dbReference>
<dbReference type="InterPro" id="IPR018456">
    <property type="entry name" value="PTR2_symporter_CS"/>
</dbReference>
<dbReference type="NCBIfam" id="TIGR00926">
    <property type="entry name" value="2A1704"/>
    <property type="match status" value="1"/>
</dbReference>
<dbReference type="PANTHER" id="PTHR11654">
    <property type="entry name" value="OLIGOPEPTIDE TRANSPORTER-RELATED"/>
    <property type="match status" value="1"/>
</dbReference>
<dbReference type="Pfam" id="PF00854">
    <property type="entry name" value="PTR2"/>
    <property type="match status" value="2"/>
</dbReference>
<dbReference type="SUPFAM" id="SSF103473">
    <property type="entry name" value="MFS general substrate transporter"/>
    <property type="match status" value="1"/>
</dbReference>
<dbReference type="PROSITE" id="PS01022">
    <property type="entry name" value="PTR2_1"/>
    <property type="match status" value="1"/>
</dbReference>
<dbReference type="PROSITE" id="PS01023">
    <property type="entry name" value="PTR2_2"/>
    <property type="match status" value="1"/>
</dbReference>
<comment type="function">
    <text evidence="1 5 7 8 11 12 13">Electrogenic proton-coupled amino-acid transporter that transports oligopeptides of 2 to 4 amino acids with a preference for dipeptides. Transports neutral and monovalently charged peptides with a proton to peptide stoichiometry of 1:1 or 2:1 (By similarity) (PubMed:15521010, PubMed:18367661, PubMed:19685173, PubMed:26320580, PubMed:7896779, PubMed:8914574, PubMed:9835627). Primarily responsible for the absorption of dietary di- and tripeptides from the small intestinal lumen (By similarity). Mediates transepithelial transport of muramyl and N-formylated bacterial dipeptides contributing to recognition of pathogenic bacteria by the mucosal immune system (PubMed:15521010, PubMed:9835627).</text>
</comment>
<comment type="catalytic activity">
    <reaction evidence="5 7 8 11 12">
        <text>a dipeptide(out) + H(+)(out) = a dipeptide(in) + H(+)(in)</text>
        <dbReference type="Rhea" id="RHEA:64392"/>
        <dbReference type="ChEBI" id="CHEBI:15378"/>
        <dbReference type="ChEBI" id="CHEBI:90799"/>
    </reaction>
    <physiologicalReaction direction="left-to-right" evidence="16 17 18 20 21">
        <dbReference type="Rhea" id="RHEA:64393"/>
    </physiologicalReaction>
</comment>
<comment type="catalytic activity">
    <reaction evidence="11 13">
        <text>an L-amino acid tripeptide(out) + H(+)(out) = an L-amino acid tripeptide(in) + H(+)(in)</text>
        <dbReference type="Rhea" id="RHEA:64400"/>
        <dbReference type="ChEBI" id="CHEBI:15378"/>
        <dbReference type="ChEBI" id="CHEBI:155837"/>
    </reaction>
    <physiologicalReaction direction="left-to-right" evidence="20 22">
        <dbReference type="Rhea" id="RHEA:64401"/>
    </physiologicalReaction>
</comment>
<comment type="catalytic activity">
    <reaction evidence="12">
        <text>L-alanyl-L-lysine(out) + H(+)(out) = L-alanyl-L-lysine(in) + H(+)(in)</text>
        <dbReference type="Rhea" id="RHEA:72611"/>
        <dbReference type="ChEBI" id="CHEBI:15378"/>
        <dbReference type="ChEBI" id="CHEBI:192470"/>
    </reaction>
    <physiologicalReaction direction="left-to-right" evidence="21">
        <dbReference type="Rhea" id="RHEA:72612"/>
    </physiologicalReaction>
</comment>
<comment type="catalytic activity">
    <reaction evidence="11">
        <text>L-alanyl-L-proline(out) + H(+)(out) = L-alanyl-L-proline(in) + H(+)(in)</text>
        <dbReference type="Rhea" id="RHEA:64420"/>
        <dbReference type="ChEBI" id="CHEBI:15378"/>
        <dbReference type="ChEBI" id="CHEBI:155848"/>
    </reaction>
    <physiologicalReaction direction="left-to-right" evidence="20">
        <dbReference type="Rhea" id="RHEA:64421"/>
    </physiologicalReaction>
</comment>
<comment type="catalytic activity">
    <reaction evidence="12">
        <text>L-alanyl-L-valine(out) + H(+)(out) = L-alanyl-L-valine(in) + H(+)(in)</text>
        <dbReference type="Rhea" id="RHEA:72615"/>
        <dbReference type="ChEBI" id="CHEBI:15378"/>
        <dbReference type="ChEBI" id="CHEBI:192471"/>
    </reaction>
    <physiologicalReaction direction="left-to-right" evidence="21">
        <dbReference type="Rhea" id="RHEA:72616"/>
    </physiologicalReaction>
</comment>
<comment type="catalytic activity">
    <reaction evidence="1">
        <text>carnosine(out) + H(+)(out) = carnosine(in) + H(+)(in)</text>
        <dbReference type="Rhea" id="RHEA:64404"/>
        <dbReference type="ChEBI" id="CHEBI:15378"/>
        <dbReference type="ChEBI" id="CHEBI:57485"/>
    </reaction>
    <physiologicalReaction direction="left-to-right" evidence="1">
        <dbReference type="Rhea" id="RHEA:64405"/>
    </physiologicalReaction>
</comment>
<comment type="catalytic activity">
    <reaction evidence="1">
        <text>glycyl-L-glutamine(out) + H(+)(out) = glycyl-L-glutamine(in) + H(+)(in)</text>
        <dbReference type="Rhea" id="RHEA:71671"/>
        <dbReference type="ChEBI" id="CHEBI:15378"/>
        <dbReference type="ChEBI" id="CHEBI:74392"/>
    </reaction>
    <physiologicalReaction direction="left-to-right" evidence="1">
        <dbReference type="Rhea" id="RHEA:71672"/>
    </physiologicalReaction>
    <physiologicalReaction direction="right-to-left" evidence="1">
        <dbReference type="Rhea" id="RHEA:71673"/>
    </physiologicalReaction>
</comment>
<comment type="catalytic activity">
    <reaction evidence="1">
        <text>glycyl-L-leucine(out) + H(+)(out) = glycyl-L-leucine(in) + H(+)(in)</text>
        <dbReference type="Rhea" id="RHEA:71675"/>
        <dbReference type="ChEBI" id="CHEBI:15378"/>
        <dbReference type="ChEBI" id="CHEBI:143163"/>
    </reaction>
    <physiologicalReaction direction="left-to-right" evidence="1">
        <dbReference type="Rhea" id="RHEA:71676"/>
    </physiologicalReaction>
</comment>
<comment type="catalytic activity">
    <reaction evidence="11">
        <text>glycyl-L-proline(out) + H(+)(out) = glycyl-L-proline(in) + H(+)(in)</text>
        <dbReference type="Rhea" id="RHEA:64428"/>
        <dbReference type="ChEBI" id="CHEBI:15378"/>
        <dbReference type="ChEBI" id="CHEBI:73779"/>
    </reaction>
    <physiologicalReaction direction="left-to-right" evidence="20">
        <dbReference type="Rhea" id="RHEA:64429"/>
    </physiologicalReaction>
</comment>
<comment type="catalytic activity">
    <reaction evidence="5 7 8 9 11 13">
        <text>glycyl-sarcosine(out) + H(+)(out) = glycyl-sarcosine(in) + H(+)(in)</text>
        <dbReference type="Rhea" id="RHEA:64396"/>
        <dbReference type="ChEBI" id="CHEBI:15378"/>
        <dbReference type="ChEBI" id="CHEBI:155838"/>
    </reaction>
    <physiologicalReaction direction="left-to-right" evidence="16 17 18 19 20 22">
        <dbReference type="Rhea" id="RHEA:64397"/>
    </physiologicalReaction>
</comment>
<comment type="catalytic activity">
    <reaction evidence="1">
        <text>L-leucyl-L-leucine(out) + H(+)(out) = L-leucyl-L-leucine(in) + H(+)(in)</text>
        <dbReference type="Rhea" id="RHEA:71715"/>
        <dbReference type="ChEBI" id="CHEBI:15378"/>
        <dbReference type="ChEBI" id="CHEBI:191208"/>
    </reaction>
    <physiologicalReaction direction="left-to-right" evidence="1">
        <dbReference type="Rhea" id="RHEA:71716"/>
    </physiologicalReaction>
</comment>
<comment type="catalytic activity">
    <reaction evidence="11">
        <text>L-leucyl-L-proline(out) + H(+)(out) = L-leucyl-L-proline(in) + H(+)(in)</text>
        <dbReference type="Rhea" id="RHEA:64424"/>
        <dbReference type="ChEBI" id="CHEBI:15378"/>
        <dbReference type="ChEBI" id="CHEBI:155847"/>
    </reaction>
    <physiologicalReaction direction="left-to-right" evidence="20">
        <dbReference type="Rhea" id="RHEA:64425"/>
    </physiologicalReaction>
</comment>
<comment type="catalytic activity">
    <reaction evidence="1">
        <text>L-phenylalanyl-L-leucine(out) + H(+)(out) = L-phenylalanyl-L-leucine(in) + H(+)(in)</text>
        <dbReference type="Rhea" id="RHEA:71699"/>
        <dbReference type="ChEBI" id="CHEBI:15378"/>
        <dbReference type="ChEBI" id="CHEBI:190710"/>
    </reaction>
    <physiologicalReaction direction="left-to-right" evidence="1">
        <dbReference type="Rhea" id="RHEA:71700"/>
    </physiologicalReaction>
</comment>
<comment type="catalytic activity">
    <reaction evidence="1">
        <text>L-phenylalanyl-L-phenylalanine(out) + H(+)(out) = L-phenylalanyl-L-phenylalanine(in) + H(+)(in)</text>
        <dbReference type="Rhea" id="RHEA:71707"/>
        <dbReference type="ChEBI" id="CHEBI:15378"/>
        <dbReference type="ChEBI" id="CHEBI:191205"/>
    </reaction>
    <physiologicalReaction direction="left-to-right" evidence="1">
        <dbReference type="Rhea" id="RHEA:71708"/>
    </physiologicalReaction>
</comment>
<comment type="catalytic activity">
    <reaction evidence="1">
        <text>L-lysyl-glycine(out) + H(+)(out) = L-lysyl-glycine(in) + H(+)(in)</text>
        <dbReference type="Rhea" id="RHEA:71679"/>
        <dbReference type="ChEBI" id="CHEBI:15378"/>
        <dbReference type="ChEBI" id="CHEBI:191202"/>
    </reaction>
    <physiologicalReaction direction="left-to-right" evidence="1">
        <dbReference type="Rhea" id="RHEA:71680"/>
    </physiologicalReaction>
    <physiologicalReaction direction="right-to-left" evidence="1">
        <dbReference type="Rhea" id="RHEA:71681"/>
    </physiologicalReaction>
</comment>
<comment type="catalytic activity">
    <reaction evidence="1">
        <text>L-tyrosylglycine(out) + H(+)(out) = L-tyrosylglycine(in) + H(+)(in)</text>
        <dbReference type="Rhea" id="RHEA:71711"/>
        <dbReference type="ChEBI" id="CHEBI:15378"/>
        <dbReference type="ChEBI" id="CHEBI:191210"/>
    </reaction>
    <physiologicalReaction direction="left-to-right" evidence="1">
        <dbReference type="Rhea" id="RHEA:71712"/>
    </physiologicalReaction>
</comment>
<comment type="catalytic activity">
    <reaction evidence="1 12">
        <text>L-alanyl-L-aspartate(out) + 2 H(+)(out) = L-alanyl-L-aspartate(in) + 2 H(+)(in)</text>
        <dbReference type="Rhea" id="RHEA:71695"/>
        <dbReference type="ChEBI" id="CHEBI:15378"/>
        <dbReference type="ChEBI" id="CHEBI:74363"/>
    </reaction>
    <physiologicalReaction direction="left-to-right" evidence="1 21">
        <dbReference type="Rhea" id="RHEA:71696"/>
    </physiologicalReaction>
</comment>
<comment type="catalytic activity">
    <reaction evidence="1">
        <text>L-aspartyl-glycine(out) + 2 H(+)(out) = L-aspartyl-glycine(in) + 2 H(+)(in)</text>
        <dbReference type="Rhea" id="RHEA:71683"/>
        <dbReference type="ChEBI" id="CHEBI:15378"/>
        <dbReference type="ChEBI" id="CHEBI:191203"/>
    </reaction>
    <physiologicalReaction direction="left-to-right" evidence="1">
        <dbReference type="Rhea" id="RHEA:71684"/>
    </physiologicalReaction>
</comment>
<comment type="catalytic activity">
    <reaction evidence="1">
        <text>glycyl-L-aspartate(out) + 2 H(+)(out) = glycyl-L-aspartate(in) + 2 H(+)(in)</text>
        <dbReference type="Rhea" id="RHEA:71687"/>
        <dbReference type="ChEBI" id="CHEBI:15378"/>
        <dbReference type="ChEBI" id="CHEBI:191204"/>
    </reaction>
    <physiologicalReaction direction="left-to-right" evidence="1">
        <dbReference type="Rhea" id="RHEA:71688"/>
    </physiologicalReaction>
    <physiologicalReaction direction="right-to-left" evidence="1">
        <dbReference type="Rhea" id="RHEA:71689"/>
    </physiologicalReaction>
</comment>
<comment type="catalytic activity">
    <reaction evidence="1">
        <text>glycyl-L-glutamate(out) + 2 H(+)(out) = glycyl-L-glutamate(in) + 2 H(+)(in)</text>
        <dbReference type="Rhea" id="RHEA:71691"/>
        <dbReference type="ChEBI" id="CHEBI:15378"/>
        <dbReference type="ChEBI" id="CHEBI:73784"/>
    </reaction>
    <physiologicalReaction direction="left-to-right" evidence="1">
        <dbReference type="Rhea" id="RHEA:71692"/>
    </physiologicalReaction>
</comment>
<comment type="catalytic activity">
    <reaction evidence="1">
        <text>L-alanyl-L-leucyl-L-alanine(out) + H(+)(out) = L-alanyl-L-leucyl-L-alanine(in) + H(+)(in)</text>
        <dbReference type="Rhea" id="RHEA:71723"/>
        <dbReference type="ChEBI" id="CHEBI:15378"/>
        <dbReference type="ChEBI" id="CHEBI:191212"/>
    </reaction>
    <physiologicalReaction direction="left-to-right" evidence="1">
        <dbReference type="Rhea" id="RHEA:71724"/>
    </physiologicalReaction>
</comment>
<comment type="catalytic activity">
    <reaction evidence="11">
        <text>L-alanyl-L-prolylglycine(out) + H(+)(out) = L-alanyl-L-prolylglycine(in) + H(+)(in)</text>
        <dbReference type="Rhea" id="RHEA:64432"/>
        <dbReference type="ChEBI" id="CHEBI:15378"/>
        <dbReference type="ChEBI" id="CHEBI:155849"/>
    </reaction>
    <physiologicalReaction direction="left-to-right" evidence="20">
        <dbReference type="Rhea" id="RHEA:64433"/>
    </physiologicalReaction>
</comment>
<comment type="catalytic activity">
    <reaction evidence="11">
        <text>glycylglycyl-L-isoleucine(out) + H(+)(out) = glycylglycyl-L-isoleucine(in) + H(+)(in)</text>
        <dbReference type="Rhea" id="RHEA:64436"/>
        <dbReference type="ChEBI" id="CHEBI:15378"/>
        <dbReference type="ChEBI" id="CHEBI:155850"/>
    </reaction>
    <physiologicalReaction direction="left-to-right" evidence="20">
        <dbReference type="Rhea" id="RHEA:64437"/>
    </physiologicalReaction>
</comment>
<comment type="catalytic activity">
    <reaction evidence="11">
        <text>glycylglycyl-L-proline(out) + H(+)(out) = glycylglycyl-L-proline(in) + H(+)(in)</text>
        <dbReference type="Rhea" id="RHEA:64440"/>
        <dbReference type="ChEBI" id="CHEBI:15378"/>
        <dbReference type="ChEBI" id="CHEBI:155851"/>
    </reaction>
    <physiologicalReaction direction="left-to-right" evidence="20">
        <dbReference type="Rhea" id="RHEA:64441"/>
    </physiologicalReaction>
</comment>
<comment type="catalytic activity">
    <reaction evidence="1">
        <text>L-methionyl-L-phenylalanyl-L-methionine(out) + H(+)(out) = L-methionyl-L-phenylalanyl-L-methionine(in) + H(+)(in)</text>
        <dbReference type="Rhea" id="RHEA:71719"/>
        <dbReference type="ChEBI" id="CHEBI:15378"/>
        <dbReference type="ChEBI" id="CHEBI:191211"/>
    </reaction>
    <physiologicalReaction direction="left-to-right" evidence="1">
        <dbReference type="Rhea" id="RHEA:71720"/>
    </physiologicalReaction>
</comment>
<comment type="catalytic activity">
    <reaction evidence="5">
        <text>N-acetyl-D-muramoyl-L-alanyl-D-isoglutamine(out) + 2 H(+)(out) = N-acetyl-D-muramoyl-L-alanyl-D-isoglutamine(in) + 2 H(+)(in)</text>
        <dbReference type="Rhea" id="RHEA:64408"/>
        <dbReference type="ChEBI" id="CHEBI:15378"/>
        <dbReference type="ChEBI" id="CHEBI:155830"/>
    </reaction>
</comment>
<comment type="catalytic activity">
    <reaction evidence="13">
        <text>N(alpha)-formyl-L-methionyl-L-leucyl-L-phenylalanine(out) + 2 H(+)(out) = N(alpha)-formyl-L-methionyl-L-leucyl-L-phenylalanine(in) + 2 H(+)(in)</text>
        <dbReference type="Rhea" id="RHEA:75399"/>
        <dbReference type="ChEBI" id="CHEBI:15378"/>
        <dbReference type="ChEBI" id="CHEBI:194314"/>
    </reaction>
</comment>
<comment type="biophysicochemical properties">
    <kinetics>
        <KM evidence="9">0.78 mM for glycyl-sarcosine</KM>
    </kinetics>
</comment>
<comment type="subunit">
    <text evidence="2">Interacts (via extracellular domain region) with trypsin.</text>
</comment>
<comment type="subcellular location">
    <subcellularLocation>
        <location evidence="10">Apical cell membrane</location>
        <topology evidence="3">Multi-pass membrane protein</topology>
    </subcellularLocation>
    <text evidence="10">Localized to the apical membrane of enterocytes.</text>
</comment>
<comment type="tissue specificity">
    <text evidence="10">Expressed in small intestine.</text>
</comment>
<comment type="domain">
    <text evidence="2">The extracellular domain (ECD) region specifically binds trypsin.</text>
</comment>
<comment type="similarity">
    <text evidence="15">Belongs to the major facilitator superfamily. Proton-dependent oligopeptide transporter (POT/PTR) (TC 2.A.17) family.</text>
</comment>
<proteinExistence type="evidence at protein level"/>
<organism>
    <name type="scientific">Homo sapiens</name>
    <name type="common">Human</name>
    <dbReference type="NCBI Taxonomy" id="9606"/>
    <lineage>
        <taxon>Eukaryota</taxon>
        <taxon>Metazoa</taxon>
        <taxon>Chordata</taxon>
        <taxon>Craniata</taxon>
        <taxon>Vertebrata</taxon>
        <taxon>Euteleostomi</taxon>
        <taxon>Mammalia</taxon>
        <taxon>Eutheria</taxon>
        <taxon>Euarchontoglires</taxon>
        <taxon>Primates</taxon>
        <taxon>Haplorrhini</taxon>
        <taxon>Catarrhini</taxon>
        <taxon>Hominidae</taxon>
        <taxon>Homo</taxon>
    </lineage>
</organism>
<keyword id="KW-0002">3D-structure</keyword>
<keyword id="KW-1003">Cell membrane</keyword>
<keyword id="KW-0325">Glycoprotein</keyword>
<keyword id="KW-0472">Membrane</keyword>
<keyword id="KW-0571">Peptide transport</keyword>
<keyword id="KW-0653">Protein transport</keyword>
<keyword id="KW-1267">Proteomics identification</keyword>
<keyword id="KW-1185">Reference proteome</keyword>
<keyword id="KW-0769">Symport</keyword>
<keyword id="KW-0812">Transmembrane</keyword>
<keyword id="KW-1133">Transmembrane helix</keyword>
<keyword id="KW-0813">Transport</keyword>
<evidence type="ECO:0000250" key="1">
    <source>
        <dbReference type="UniProtKB" id="P36836"/>
    </source>
</evidence>
<evidence type="ECO:0000250" key="2">
    <source>
        <dbReference type="UniProtKB" id="Q9JIP7"/>
    </source>
</evidence>
<evidence type="ECO:0000255" key="3"/>
<evidence type="ECO:0000269" key="4">
    <source>
    </source>
</evidence>
<evidence type="ECO:0000269" key="5">
    <source>
    </source>
</evidence>
<evidence type="ECO:0000269" key="6">
    <source>
    </source>
</evidence>
<evidence type="ECO:0000269" key="7">
    <source>
    </source>
</evidence>
<evidence type="ECO:0000269" key="8">
    <source>
    </source>
</evidence>
<evidence type="ECO:0000269" key="9">
    <source>
    </source>
</evidence>
<evidence type="ECO:0000269" key="10">
    <source>
    </source>
</evidence>
<evidence type="ECO:0000269" key="11">
    <source>
    </source>
</evidence>
<evidence type="ECO:0000269" key="12">
    <source>
    </source>
</evidence>
<evidence type="ECO:0000269" key="13">
    <source>
    </source>
</evidence>
<evidence type="ECO:0000303" key="14">
    <source>
    </source>
</evidence>
<evidence type="ECO:0000305" key="15"/>
<evidence type="ECO:0000305" key="16">
    <source>
    </source>
</evidence>
<evidence type="ECO:0000305" key="17">
    <source>
    </source>
</evidence>
<evidence type="ECO:0000305" key="18">
    <source>
    </source>
</evidence>
<evidence type="ECO:0000305" key="19">
    <source>
    </source>
</evidence>
<evidence type="ECO:0000305" key="20">
    <source>
    </source>
</evidence>
<evidence type="ECO:0000305" key="21">
    <source>
    </source>
</evidence>
<evidence type="ECO:0000305" key="22">
    <source>
    </source>
</evidence>
<evidence type="ECO:0000312" key="23">
    <source>
        <dbReference type="HGNC" id="HGNC:10920"/>
    </source>
</evidence>
<evidence type="ECO:0007829" key="24">
    <source>
        <dbReference type="PDB" id="7PMX"/>
    </source>
</evidence>
<reference key="1">
    <citation type="journal article" date="1995" name="J. Biol. Chem.">
        <title>Human intestinal H+/peptide cotransporter. Cloning, functional expression, and chromosomal localization.</title>
        <authorList>
            <person name="Liang R."/>
            <person name="Fei Y.-J."/>
            <person name="Prasad P.D."/>
            <person name="Ramamoorthy S."/>
            <person name="Han H."/>
            <person name="Yang-Feng T.L."/>
            <person name="Hediger M.A."/>
            <person name="Ganapathy V."/>
            <person name="Leibach F.H."/>
        </authorList>
    </citation>
    <scope>NUCLEOTIDE SEQUENCE [MRNA]</scope>
    <scope>FUNCTION</scope>
    <scope>TRANSPORTER ACTIVITY</scope>
    <source>
        <tissue>Intestine</tissue>
    </source>
</reference>
<reference key="2">
    <citation type="journal article" date="2004" name="Nature">
        <title>The DNA sequence and analysis of human chromosome 13.</title>
        <authorList>
            <person name="Dunham A."/>
            <person name="Matthews L.H."/>
            <person name="Burton J."/>
            <person name="Ashurst J.L."/>
            <person name="Howe K.L."/>
            <person name="Ashcroft K.J."/>
            <person name="Beare D.M."/>
            <person name="Burford D.C."/>
            <person name="Hunt S.E."/>
            <person name="Griffiths-Jones S."/>
            <person name="Jones M.C."/>
            <person name="Keenan S.J."/>
            <person name="Oliver K."/>
            <person name="Scott C.E."/>
            <person name="Ainscough R."/>
            <person name="Almeida J.P."/>
            <person name="Ambrose K.D."/>
            <person name="Andrews D.T."/>
            <person name="Ashwell R.I.S."/>
            <person name="Babbage A.K."/>
            <person name="Bagguley C.L."/>
            <person name="Bailey J."/>
            <person name="Bannerjee R."/>
            <person name="Barlow K.F."/>
            <person name="Bates K."/>
            <person name="Beasley H."/>
            <person name="Bird C.P."/>
            <person name="Bray-Allen S."/>
            <person name="Brown A.J."/>
            <person name="Brown J.Y."/>
            <person name="Burrill W."/>
            <person name="Carder C."/>
            <person name="Carter N.P."/>
            <person name="Chapman J.C."/>
            <person name="Clamp M.E."/>
            <person name="Clark S.Y."/>
            <person name="Clarke G."/>
            <person name="Clee C.M."/>
            <person name="Clegg S.C."/>
            <person name="Cobley V."/>
            <person name="Collins J.E."/>
            <person name="Corby N."/>
            <person name="Coville G.J."/>
            <person name="Deloukas P."/>
            <person name="Dhami P."/>
            <person name="Dunham I."/>
            <person name="Dunn M."/>
            <person name="Earthrowl M.E."/>
            <person name="Ellington A.G."/>
            <person name="Faulkner L."/>
            <person name="Frankish A.G."/>
            <person name="Frankland J."/>
            <person name="French L."/>
            <person name="Garner P."/>
            <person name="Garnett J."/>
            <person name="Gilbert J.G.R."/>
            <person name="Gilson C.J."/>
            <person name="Ghori J."/>
            <person name="Grafham D.V."/>
            <person name="Gribble S.M."/>
            <person name="Griffiths C."/>
            <person name="Hall R.E."/>
            <person name="Hammond S."/>
            <person name="Harley J.L."/>
            <person name="Hart E.A."/>
            <person name="Heath P.D."/>
            <person name="Howden P.J."/>
            <person name="Huckle E.J."/>
            <person name="Hunt P.J."/>
            <person name="Hunt A.R."/>
            <person name="Johnson C."/>
            <person name="Johnson D."/>
            <person name="Kay M."/>
            <person name="Kimberley A.M."/>
            <person name="King A."/>
            <person name="Laird G.K."/>
            <person name="Langford C.J."/>
            <person name="Lawlor S."/>
            <person name="Leongamornlert D.A."/>
            <person name="Lloyd D.M."/>
            <person name="Lloyd C."/>
            <person name="Loveland J.E."/>
            <person name="Lovell J."/>
            <person name="Martin S."/>
            <person name="Mashreghi-Mohammadi M."/>
            <person name="McLaren S.J."/>
            <person name="McMurray A."/>
            <person name="Milne S."/>
            <person name="Moore M.J.F."/>
            <person name="Nickerson T."/>
            <person name="Palmer S.A."/>
            <person name="Pearce A.V."/>
            <person name="Peck A.I."/>
            <person name="Pelan S."/>
            <person name="Phillimore B."/>
            <person name="Porter K.M."/>
            <person name="Rice C.M."/>
            <person name="Searle S."/>
            <person name="Sehra H.K."/>
            <person name="Shownkeen R."/>
            <person name="Skuce C.D."/>
            <person name="Smith M."/>
            <person name="Steward C.A."/>
            <person name="Sycamore N."/>
            <person name="Tester J."/>
            <person name="Thomas D.W."/>
            <person name="Tracey A."/>
            <person name="Tromans A."/>
            <person name="Tubby B."/>
            <person name="Wall M."/>
            <person name="Wallis J.M."/>
            <person name="West A.P."/>
            <person name="Whitehead S.L."/>
            <person name="Willey D.L."/>
            <person name="Wilming L."/>
            <person name="Wray P.W."/>
            <person name="Wright M.W."/>
            <person name="Young L."/>
            <person name="Coulson A."/>
            <person name="Durbin R.M."/>
            <person name="Hubbard T."/>
            <person name="Sulston J.E."/>
            <person name="Beck S."/>
            <person name="Bentley D.R."/>
            <person name="Rogers J."/>
            <person name="Ross M.T."/>
        </authorList>
    </citation>
    <scope>NUCLEOTIDE SEQUENCE [LARGE SCALE GENOMIC DNA]</scope>
</reference>
<reference key="3">
    <citation type="journal article" date="2004" name="Genome Res.">
        <title>The status, quality, and expansion of the NIH full-length cDNA project: the Mammalian Gene Collection (MGC).</title>
        <authorList>
            <consortium name="The MGC Project Team"/>
        </authorList>
    </citation>
    <scope>NUCLEOTIDE SEQUENCE [LARGE SCALE MRNA]</scope>
</reference>
<reference key="4">
    <citation type="journal article" date="1996" name="Biochim. Biophys. Acta">
        <title>The human intestinal H+/oligopeptide cotransporter hPEPT1 transports differently-charged dipeptides with identical electrogenic properties.</title>
        <authorList>
            <person name="Mackenzie B."/>
            <person name="Fei Y.J."/>
            <person name="Ganapathy V."/>
            <person name="Leibach F.H."/>
        </authorList>
    </citation>
    <scope>FUNCTION</scope>
    <scope>TRANSPORTER ACTIVITY</scope>
</reference>
<reference key="5">
    <citation type="journal article" date="1998" name="J. Clin. Invest.">
        <title>hPepT1-mediated epithelial transport of bacteria-derived chemotactic peptides enhances neutrophil-epithelial interactions.</title>
        <authorList>
            <person name="Merlin D."/>
            <person name="Steel A."/>
            <person name="Gewirtz A.T."/>
            <person name="Si-Tahar M."/>
            <person name="Hediger M.A."/>
            <person name="Madara J.L."/>
        </authorList>
    </citation>
    <scope>FUNCTION</scope>
    <scope>TRANSPORTER ACTIVITY</scope>
</reference>
<reference key="6">
    <citation type="journal article" date="2004" name="Gastroenterology">
        <title>hPepT1 transports muramyl dipeptide, activating NF-kappaB and stimulating IL-8 secretion in human colonic Caco2/bbe cells.</title>
        <authorList>
            <person name="Vavricka S.R."/>
            <person name="Musch M.W."/>
            <person name="Chang J.E."/>
            <person name="Nakagawa Y."/>
            <person name="Phanvijhitsiri K."/>
            <person name="Waypa T.S."/>
            <person name="Merlin D."/>
            <person name="Schneewind O."/>
            <person name="Chang E.B."/>
        </authorList>
    </citation>
    <scope>FUNCTION</scope>
    <scope>TRANSPORTER ACTIVITY</scope>
</reference>
<reference key="7">
    <citation type="journal article" date="2008" name="Am. J. Physiol.">
        <title>Molecular mechanism of dipeptide and drug transport by the human renal H+/oligopeptide cotransporter hPEPT2.</title>
        <authorList>
            <person name="Sala-Rabanal M."/>
            <person name="Loo D.D."/>
            <person name="Hirayama B.A."/>
            <person name="Wright E.M."/>
        </authorList>
    </citation>
    <scope>FUNCTION</scope>
    <scope>TRANSPORTER ACTIVITY</scope>
</reference>
<reference key="8">
    <citation type="journal article" date="2009" name="Pharm. Res.">
        <title>Mutagenesis and cysteine scanning of transmembrane domain 10 of the human dipeptide transporter.</title>
        <authorList>
            <person name="Xu L."/>
            <person name="Haworth I.S."/>
            <person name="Kulkarni A.A."/>
            <person name="Bolger M.B."/>
            <person name="Davies D.L."/>
        </authorList>
    </citation>
    <scope>FUNCTION</scope>
    <scope>TRANSPORTER ACTIVITY</scope>
    <scope>MUTAGENESIS OF TYR-588; GLY-594 AND GLU-595</scope>
</reference>
<reference key="9">
    <citation type="journal article" date="2015" name="Structure">
        <title>Crystal structures of the extracellular domain from PepT1 and PepT2 provide novel insights into mammalian peptide transport.</title>
        <authorList>
            <person name="Beale J.H."/>
            <person name="Parker J.L."/>
            <person name="Samsudin F."/>
            <person name="Barrett A.L."/>
            <person name="Senan A."/>
            <person name="Bird L.E."/>
            <person name="Scott D."/>
            <person name="Owens R.J."/>
            <person name="Sansom M.S.P."/>
            <person name="Tucker S.J."/>
            <person name="Meredith D."/>
            <person name="Fowler P.W."/>
            <person name="Newstead S."/>
        </authorList>
    </citation>
    <scope>FUNCTION</scope>
    <scope>TRANSPORTER ACTIVITY</scope>
    <scope>BIOPHYSICOCHEMICAL PROPERTIES</scope>
    <scope>MUTAGENESIS OF ASP-573</scope>
</reference>
<reference key="10">
    <citation type="journal article" date="2017" name="J. Pharm. Sci.">
        <title>The Organic Anion-Transporting Peptide 2B1 Is Localized in the Basolateral Membrane of the Human Jejunum and Caco-2 Monolayers.</title>
        <authorList>
            <person name="Keiser M."/>
            <person name="Kaltheuner L."/>
            <person name="Wildberg C."/>
            <person name="Mueller J."/>
            <person name="Grube M."/>
            <person name="Partecke L.I."/>
            <person name="Heidecke C.D."/>
            <person name="Oswald S."/>
        </authorList>
    </citation>
    <scope>SUBCELLULAR LOCATION</scope>
    <scope>TISSUE SPECIFICITY</scope>
</reference>
<reference key="11">
    <citation type="journal article" date="2002" name="J. Hum. Genet.">
        <title>Catalog of 238 variations among six human genes encoding solute carriers (hSLCs) in the Japanese population.</title>
        <authorList>
            <person name="Saito S."/>
            <person name="Iida A."/>
            <person name="Sekine A."/>
            <person name="Ogawa C."/>
            <person name="Kawauchi S."/>
            <person name="Higuchi S."/>
            <person name="Nakamura Y."/>
        </authorList>
    </citation>
    <scope>VARIANTS ASN-117 AND ALA-419</scope>
</reference>
<reference key="12">
    <citation type="journal article" date="2006" name="J. Pharmacol. Exp. Ther.">
        <title>Genetic variants of the human dipeptide transporter PEPT1.</title>
        <authorList>
            <person name="Anderle P."/>
            <person name="Nielsen C.U."/>
            <person name="Pinsonneault J."/>
            <person name="Krog P.L."/>
            <person name="Brodin B."/>
            <person name="Sadee W."/>
        </authorList>
    </citation>
    <scope>VARIANTS ILE-21; TYR-28; ASN-117; ARG-117; MET-122; ALA-419; ILE-450; ASN-451 AND SER-537</scope>
</reference>
<sequence length="708" mass="78806">MGMSKSHSFFGYPLSIFFIVVNEFCERFSYYGMRAILILYFTNFISWDDNLSTAIYHTFVALCYLTPILGALIADSWLGKFKTIVSLSIVYTIGQAVTSVSSINDLTDHNHDGTPDSLPVHVVLSLIGLALIALGTGGIKPCVSAFGGDQFEEGQEKQRNRFFSIFYLAINAGSLLSTIITPMLRVQQCGIHSKQACYPLAFGVPAALMAVALIVFVLGSGMYKKFKPQGNIMGKVAKCIGFAIKNRFRHRSKAFPKREHWLDWAKEKYDERLISQIKMVTRVMFLYIPLPMFWALFDQQGSRWTLQATTMSGKIGALEIQPDQMQTVNAILIVIMVPIFDAVLYPLIAKCGFNFTSLKKMAVGMVLASMAFVVAAIVQVEIDKTLPVFPKGNEVQIKVLNIGNNTMNISLPGEMVTLGPMSQTNAFMTFDVNKLTRINISSPGSPVTAVTDDFKQGQRHTLLVWAPNHYQVVKDGLNQKPEKGENGIRFVNTFNELITITMSGKVYANISSYNASTYQFFPSGIKGFTISSTEIPPQCQPNFNTFYLEFGSAYTYIVQRKNDSCPEVKVFEDISANTVNMALQIPQYFLLTCGEVVFSVTGLEFSYSQAPSNMKSVLQAGWLLTVAVGNIIVLIVAGAGQFSKQWAEYILFAALLLVVCVIFAIMARFYTYINPAEIEAQFDEDEKKNRLEKSNPYFMSGANSQKQM</sequence>